<proteinExistence type="inferred from homology"/>
<feature type="chain" id="PRO_0000117183" description="tRNA uridine 5-carboxymethylaminomethyl modification enzyme MnmG">
    <location>
        <begin position="1"/>
        <end position="625"/>
    </location>
</feature>
<feature type="binding site" evidence="1">
    <location>
        <begin position="11"/>
        <end position="16"/>
    </location>
    <ligand>
        <name>FAD</name>
        <dbReference type="ChEBI" id="CHEBI:57692"/>
    </ligand>
</feature>
<feature type="binding site" evidence="1">
    <location>
        <position position="123"/>
    </location>
    <ligand>
        <name>FAD</name>
        <dbReference type="ChEBI" id="CHEBI:57692"/>
    </ligand>
</feature>
<feature type="binding site" evidence="1">
    <location>
        <position position="178"/>
    </location>
    <ligand>
        <name>FAD</name>
        <dbReference type="ChEBI" id="CHEBI:57692"/>
    </ligand>
</feature>
<feature type="binding site" evidence="1">
    <location>
        <begin position="270"/>
        <end position="284"/>
    </location>
    <ligand>
        <name>NAD(+)</name>
        <dbReference type="ChEBI" id="CHEBI:57540"/>
    </ligand>
</feature>
<feature type="binding site" evidence="1">
    <location>
        <position position="367"/>
    </location>
    <ligand>
        <name>FAD</name>
        <dbReference type="ChEBI" id="CHEBI:57692"/>
    </ligand>
</feature>
<gene>
    <name evidence="1" type="primary">mnmG</name>
    <name evidence="1" type="synonym">gidA</name>
    <name type="ordered locus">SH2675</name>
</gene>
<protein>
    <recommendedName>
        <fullName evidence="1">tRNA uridine 5-carboxymethylaminomethyl modification enzyme MnmG</fullName>
    </recommendedName>
    <alternativeName>
        <fullName evidence="1">Glucose-inhibited division protein A</fullName>
    </alternativeName>
</protein>
<evidence type="ECO:0000255" key="1">
    <source>
        <dbReference type="HAMAP-Rule" id="MF_00129"/>
    </source>
</evidence>
<name>MNMG_STAHJ</name>
<accession>Q4L2Z3</accession>
<organism>
    <name type="scientific">Staphylococcus haemolyticus (strain JCSC1435)</name>
    <dbReference type="NCBI Taxonomy" id="279808"/>
    <lineage>
        <taxon>Bacteria</taxon>
        <taxon>Bacillati</taxon>
        <taxon>Bacillota</taxon>
        <taxon>Bacilli</taxon>
        <taxon>Bacillales</taxon>
        <taxon>Staphylococcaceae</taxon>
        <taxon>Staphylococcus</taxon>
    </lineage>
</organism>
<reference key="1">
    <citation type="journal article" date="2005" name="J. Bacteriol.">
        <title>Whole-genome sequencing of Staphylococcus haemolyticus uncovers the extreme plasticity of its genome and the evolution of human-colonizing staphylococcal species.</title>
        <authorList>
            <person name="Takeuchi F."/>
            <person name="Watanabe S."/>
            <person name="Baba T."/>
            <person name="Yuzawa H."/>
            <person name="Ito T."/>
            <person name="Morimoto Y."/>
            <person name="Kuroda M."/>
            <person name="Cui L."/>
            <person name="Takahashi M."/>
            <person name="Ankai A."/>
            <person name="Baba S."/>
            <person name="Fukui S."/>
            <person name="Lee J.C."/>
            <person name="Hiramatsu K."/>
        </authorList>
    </citation>
    <scope>NUCLEOTIDE SEQUENCE [LARGE SCALE GENOMIC DNA]</scope>
    <source>
        <strain>JCSC1435</strain>
    </source>
</reference>
<dbReference type="EMBL" id="AP006716">
    <property type="protein sequence ID" value="BAE05984.1"/>
    <property type="molecule type" value="Genomic_DNA"/>
</dbReference>
<dbReference type="RefSeq" id="WP_011276914.1">
    <property type="nucleotide sequence ID" value="NC_007168.1"/>
</dbReference>
<dbReference type="SMR" id="Q4L2Z3"/>
<dbReference type="GeneID" id="93781912"/>
<dbReference type="KEGG" id="sha:SH2675"/>
<dbReference type="eggNOG" id="COG0445">
    <property type="taxonomic scope" value="Bacteria"/>
</dbReference>
<dbReference type="HOGENOM" id="CLU_007831_2_2_9"/>
<dbReference type="OrthoDB" id="9815560at2"/>
<dbReference type="Proteomes" id="UP000000543">
    <property type="component" value="Chromosome"/>
</dbReference>
<dbReference type="GO" id="GO:0005829">
    <property type="term" value="C:cytosol"/>
    <property type="evidence" value="ECO:0007669"/>
    <property type="project" value="TreeGrafter"/>
</dbReference>
<dbReference type="GO" id="GO:0050660">
    <property type="term" value="F:flavin adenine dinucleotide binding"/>
    <property type="evidence" value="ECO:0007669"/>
    <property type="project" value="UniProtKB-UniRule"/>
</dbReference>
<dbReference type="GO" id="GO:0030488">
    <property type="term" value="P:tRNA methylation"/>
    <property type="evidence" value="ECO:0007669"/>
    <property type="project" value="TreeGrafter"/>
</dbReference>
<dbReference type="GO" id="GO:0002098">
    <property type="term" value="P:tRNA wobble uridine modification"/>
    <property type="evidence" value="ECO:0007669"/>
    <property type="project" value="InterPro"/>
</dbReference>
<dbReference type="FunFam" id="1.10.10.1800:FF:000001">
    <property type="entry name" value="tRNA uridine 5-carboxymethylaminomethyl modification enzyme MnmG"/>
    <property type="match status" value="1"/>
</dbReference>
<dbReference type="FunFam" id="1.10.150.570:FF:000001">
    <property type="entry name" value="tRNA uridine 5-carboxymethylaminomethyl modification enzyme MnmG"/>
    <property type="match status" value="1"/>
</dbReference>
<dbReference type="FunFam" id="3.50.50.60:FF:000002">
    <property type="entry name" value="tRNA uridine 5-carboxymethylaminomethyl modification enzyme MnmG"/>
    <property type="match status" value="1"/>
</dbReference>
<dbReference type="FunFam" id="3.50.50.60:FF:000063">
    <property type="entry name" value="tRNA uridine 5-carboxymethylaminomethyl modification enzyme MnmG"/>
    <property type="match status" value="1"/>
</dbReference>
<dbReference type="Gene3D" id="3.50.50.60">
    <property type="entry name" value="FAD/NAD(P)-binding domain"/>
    <property type="match status" value="2"/>
</dbReference>
<dbReference type="Gene3D" id="1.10.150.570">
    <property type="entry name" value="GidA associated domain, C-terminal subdomain"/>
    <property type="match status" value="1"/>
</dbReference>
<dbReference type="Gene3D" id="1.10.10.1800">
    <property type="entry name" value="tRNA uridine 5-carboxymethylaminomethyl modification enzyme MnmG/GidA"/>
    <property type="match status" value="1"/>
</dbReference>
<dbReference type="HAMAP" id="MF_00129">
    <property type="entry name" value="MnmG_GidA"/>
    <property type="match status" value="1"/>
</dbReference>
<dbReference type="InterPro" id="IPR036188">
    <property type="entry name" value="FAD/NAD-bd_sf"/>
</dbReference>
<dbReference type="InterPro" id="IPR049312">
    <property type="entry name" value="GIDA_C_N"/>
</dbReference>
<dbReference type="InterPro" id="IPR004416">
    <property type="entry name" value="MnmG"/>
</dbReference>
<dbReference type="InterPro" id="IPR002218">
    <property type="entry name" value="MnmG-rel"/>
</dbReference>
<dbReference type="InterPro" id="IPR020595">
    <property type="entry name" value="MnmG-rel_CS"/>
</dbReference>
<dbReference type="InterPro" id="IPR026904">
    <property type="entry name" value="MnmG_C"/>
</dbReference>
<dbReference type="InterPro" id="IPR047001">
    <property type="entry name" value="MnmG_C_subdom"/>
</dbReference>
<dbReference type="InterPro" id="IPR044920">
    <property type="entry name" value="MnmG_C_subdom_sf"/>
</dbReference>
<dbReference type="InterPro" id="IPR040131">
    <property type="entry name" value="MnmG_N"/>
</dbReference>
<dbReference type="NCBIfam" id="TIGR00136">
    <property type="entry name" value="mnmG_gidA"/>
    <property type="match status" value="1"/>
</dbReference>
<dbReference type="PANTHER" id="PTHR11806">
    <property type="entry name" value="GLUCOSE INHIBITED DIVISION PROTEIN A"/>
    <property type="match status" value="1"/>
</dbReference>
<dbReference type="PANTHER" id="PTHR11806:SF0">
    <property type="entry name" value="PROTEIN MTO1 HOMOLOG, MITOCHONDRIAL"/>
    <property type="match status" value="1"/>
</dbReference>
<dbReference type="Pfam" id="PF01134">
    <property type="entry name" value="GIDA"/>
    <property type="match status" value="1"/>
</dbReference>
<dbReference type="Pfam" id="PF21680">
    <property type="entry name" value="GIDA_C_1st"/>
    <property type="match status" value="1"/>
</dbReference>
<dbReference type="Pfam" id="PF13932">
    <property type="entry name" value="SAM_GIDA_C"/>
    <property type="match status" value="1"/>
</dbReference>
<dbReference type="PRINTS" id="PR00411">
    <property type="entry name" value="PNDRDTASEI"/>
</dbReference>
<dbReference type="SMART" id="SM01228">
    <property type="entry name" value="GIDA_assoc_3"/>
    <property type="match status" value="1"/>
</dbReference>
<dbReference type="SUPFAM" id="SSF51905">
    <property type="entry name" value="FAD/NAD(P)-binding domain"/>
    <property type="match status" value="1"/>
</dbReference>
<dbReference type="PROSITE" id="PS01280">
    <property type="entry name" value="GIDA_1"/>
    <property type="match status" value="1"/>
</dbReference>
<dbReference type="PROSITE" id="PS01281">
    <property type="entry name" value="GIDA_2"/>
    <property type="match status" value="1"/>
</dbReference>
<keyword id="KW-0963">Cytoplasm</keyword>
<keyword id="KW-0274">FAD</keyword>
<keyword id="KW-0285">Flavoprotein</keyword>
<keyword id="KW-0520">NAD</keyword>
<keyword id="KW-0819">tRNA processing</keyword>
<comment type="function">
    <text evidence="1">NAD-binding protein involved in the addition of a carboxymethylaminomethyl (cmnm) group at the wobble position (U34) of certain tRNAs, forming tRNA-cmnm(5)s(2)U34.</text>
</comment>
<comment type="cofactor">
    <cofactor evidence="1">
        <name>FAD</name>
        <dbReference type="ChEBI" id="CHEBI:57692"/>
    </cofactor>
</comment>
<comment type="subunit">
    <text evidence="1">Homodimer. Heterotetramer of two MnmE and two MnmG subunits.</text>
</comment>
<comment type="subcellular location">
    <subcellularLocation>
        <location evidence="1">Cytoplasm</location>
    </subcellularLocation>
</comment>
<comment type="similarity">
    <text evidence="1">Belongs to the MnmG family.</text>
</comment>
<sequence>MVQEYDVIVIGAGHAGIEAGLASARRGAKTLMLTINLDNIAFMPCNPSVGGPAKGIVVREIDALGGQMAKAIDKTHIQMRMLNTGKGPAVRALRAQADKVLYQQEMKRVIEDEDNLDIMQGMVDELIIEDNEVKGVRTNIGTEYRAQAVVITTGTFLRGEIILGNMKYSSGPNHQLPSITLADNLRELGFEVVRFKTGTPPRVNAKTIDYSKTEIQPGDDVGRAFSFETTEYILDQLPCWLTYTNDRTHKVIDDNLHLSAMYSGMIKGTGPRYCPSIEDKFVRFNDKPRHQLFLEPEGRNTNEVYVQGLSTSLPEHVQRQMLETIPGLEKADMMRAGYAIEYDAIVPTQLWPTLETKMIKNLYTAGQINGTSGYEEAAGQGIMAGINAAGKVLGTGEKILSRSDAYIGVLIDDLVTKGTNEPYRLLTSRAEYRLLLRHDNADLRLTDVGYELGMISEERYARFNEKRQQIQDEIQRLTDIRIKPNEHTQSVIEANGGSRLKDGILAIDLLRRPEMTYNTILEILEESHQLPEAVEEQVEIQTKYEGYINKSLQQVEKVKRMEEKKIPEDLDYSKVDSLATEAREKLAEVKPLNIAQASRISGVNPADISILLVYLEQGKLQRVKN</sequence>